<proteinExistence type="inferred from homology"/>
<organism>
    <name type="scientific">Mytilus edulis</name>
    <name type="common">Blue mussel</name>
    <dbReference type="NCBI Taxonomy" id="6550"/>
    <lineage>
        <taxon>Eukaryota</taxon>
        <taxon>Metazoa</taxon>
        <taxon>Spiralia</taxon>
        <taxon>Lophotrochozoa</taxon>
        <taxon>Mollusca</taxon>
        <taxon>Bivalvia</taxon>
        <taxon>Autobranchia</taxon>
        <taxon>Pteriomorphia</taxon>
        <taxon>Mytilida</taxon>
        <taxon>Mytiloidea</taxon>
        <taxon>Mytilidae</taxon>
        <taxon>Mytilinae</taxon>
        <taxon>Mytilus</taxon>
    </lineage>
</organism>
<keyword id="KW-0066">ATP synthesis</keyword>
<keyword id="KW-0138">CF(0)</keyword>
<keyword id="KW-0375">Hydrogen ion transport</keyword>
<keyword id="KW-0406">Ion transport</keyword>
<keyword id="KW-0472">Membrane</keyword>
<keyword id="KW-0496">Mitochondrion</keyword>
<keyword id="KW-0999">Mitochondrion inner membrane</keyword>
<keyword id="KW-0812">Transmembrane</keyword>
<keyword id="KW-1133">Transmembrane helix</keyword>
<keyword id="KW-0813">Transport</keyword>
<geneLocation type="mitochondrion"/>
<sequence>MLMDVFSSFDAHSYNLIWLSMPLWLLSSMVPMTVLFSDVHSKSGSTSSFRSLVLSFTYSMIRLNGKGLKLSGFPLVMSGLFMMILMLNLSGNFPFFFPVSGQFVFGFSFALSIWTCLVLSSLLCSFEQGLMSLVPTGCPLILVPFMVVVELISGMLRPLTLVLRLTLNLGAGKVILTMCSSELVVGWLNSSSLITGVGGIKGLLMGGGVFGAAEVAIACIQCYIFCVLLCLYTEDHSS</sequence>
<accession>Q00224</accession>
<accession>Q68SR0</accession>
<reference key="1">
    <citation type="journal article" date="1992" name="Genetics">
        <title>A novel mitochondrial genome organization for the blue mussel, Mytilus edulis.</title>
        <authorList>
            <person name="Hoffmann R.J."/>
            <person name="Boore J.L."/>
            <person name="Brown W.M."/>
        </authorList>
    </citation>
    <scope>NUCLEOTIDE SEQUENCE [GENOMIC DNA]</scope>
</reference>
<reference key="2">
    <citation type="journal article" date="2004" name="Mol. Biol. Evol.">
        <title>Complete sequences of the highly rearranged molluscan mitochondrial genomes of the scaphopod Graptacme eborea and the bivalve Mytilus edulis.</title>
        <authorList>
            <person name="Boore J.L."/>
            <person name="Medina M."/>
            <person name="Rosenberg L.A."/>
        </authorList>
    </citation>
    <scope>NUCLEOTIDE SEQUENCE [GENOMIC DNA]</scope>
</reference>
<name>ATP6_MYTED</name>
<gene>
    <name type="primary">ATP6</name>
</gene>
<dbReference type="EMBL" id="AY484747">
    <property type="protein sequence ID" value="AAT98403.1"/>
    <property type="molecule type" value="Genomic_DNA"/>
</dbReference>
<dbReference type="PIR" id="S28758">
    <property type="entry name" value="S28758"/>
</dbReference>
<dbReference type="RefSeq" id="YP_073344.1">
    <property type="nucleotide sequence ID" value="NC_006161.1"/>
</dbReference>
<dbReference type="SMR" id="Q00224"/>
<dbReference type="GO" id="GO:0005743">
    <property type="term" value="C:mitochondrial inner membrane"/>
    <property type="evidence" value="ECO:0007669"/>
    <property type="project" value="UniProtKB-SubCell"/>
</dbReference>
<dbReference type="GO" id="GO:0045259">
    <property type="term" value="C:proton-transporting ATP synthase complex"/>
    <property type="evidence" value="ECO:0007669"/>
    <property type="project" value="UniProtKB-KW"/>
</dbReference>
<dbReference type="GO" id="GO:0046933">
    <property type="term" value="F:proton-transporting ATP synthase activity, rotational mechanism"/>
    <property type="evidence" value="ECO:0007669"/>
    <property type="project" value="TreeGrafter"/>
</dbReference>
<dbReference type="CDD" id="cd00310">
    <property type="entry name" value="ATP-synt_Fo_a_6"/>
    <property type="match status" value="1"/>
</dbReference>
<dbReference type="Gene3D" id="1.20.120.220">
    <property type="entry name" value="ATP synthase, F0 complex, subunit A"/>
    <property type="match status" value="1"/>
</dbReference>
<dbReference type="InterPro" id="IPR000568">
    <property type="entry name" value="ATP_synth_F0_asu"/>
</dbReference>
<dbReference type="InterPro" id="IPR045083">
    <property type="entry name" value="ATP_synth_F0_asu_bact/mt"/>
</dbReference>
<dbReference type="InterPro" id="IPR035908">
    <property type="entry name" value="F0_ATP_A_sf"/>
</dbReference>
<dbReference type="NCBIfam" id="TIGR01131">
    <property type="entry name" value="ATP_synt_6_or_A"/>
    <property type="match status" value="1"/>
</dbReference>
<dbReference type="PANTHER" id="PTHR11410">
    <property type="entry name" value="ATP SYNTHASE SUBUNIT A"/>
    <property type="match status" value="1"/>
</dbReference>
<dbReference type="PANTHER" id="PTHR11410:SF0">
    <property type="entry name" value="ATP SYNTHASE SUBUNIT A"/>
    <property type="match status" value="1"/>
</dbReference>
<dbReference type="Pfam" id="PF00119">
    <property type="entry name" value="ATP-synt_A"/>
    <property type="match status" value="1"/>
</dbReference>
<dbReference type="PRINTS" id="PR00123">
    <property type="entry name" value="ATPASEA"/>
</dbReference>
<dbReference type="SUPFAM" id="SSF81336">
    <property type="entry name" value="F1F0 ATP synthase subunit A"/>
    <property type="match status" value="1"/>
</dbReference>
<evidence type="ECO:0000255" key="1"/>
<evidence type="ECO:0000305" key="2"/>
<feature type="chain" id="PRO_0000082140" description="ATP synthase subunit a">
    <location>
        <begin position="1"/>
        <end position="238"/>
    </location>
</feature>
<feature type="transmembrane region" description="Helical" evidence="1">
    <location>
        <begin position="16"/>
        <end position="36"/>
    </location>
</feature>
<feature type="transmembrane region" description="Helical" evidence="1">
    <location>
        <begin position="79"/>
        <end position="99"/>
    </location>
</feature>
<feature type="transmembrane region" description="Helical" evidence="1">
    <location>
        <begin position="103"/>
        <end position="123"/>
    </location>
</feature>
<feature type="transmembrane region" description="Helical" evidence="1">
    <location>
        <begin position="129"/>
        <end position="149"/>
    </location>
</feature>
<feature type="transmembrane region" description="Helical" evidence="1">
    <location>
        <begin position="209"/>
        <end position="229"/>
    </location>
</feature>
<comment type="function">
    <text>Mitochondrial membrane ATP synthase (F(1)F(0) ATP synthase or Complex V) produces ATP from ADP in the presence of a proton gradient across the membrane which is generated by electron transport complexes of the respiratory chain. F-type ATPases consist of two structural domains, F(1) - containing the extramembraneous catalytic core and F(0) - containing the membrane proton channel, linked together by a central stalk and a peripheral stalk. During catalysis, ATP synthesis in the catalytic domain of F(1) is coupled via a rotary mechanism of the central stalk subunits to proton translocation. Key component of the proton channel; it may play a direct role in the translocation of protons across the membrane.</text>
</comment>
<comment type="subunit">
    <text>F-type ATPases have 2 components, CF(1) - the catalytic core - and CF(0) - the membrane proton channel. CF(1) has five subunits: alpha(3), beta(3), gamma(1), delta(1), epsilon(1). CF(0) has three main subunits: a, b and c.</text>
</comment>
<comment type="subcellular location">
    <subcellularLocation>
        <location>Mitochondrion inner membrane</location>
        <topology>Multi-pass membrane protein</topology>
    </subcellularLocation>
</comment>
<comment type="similarity">
    <text evidence="2">Belongs to the ATPase A chain family.</text>
</comment>
<protein>
    <recommendedName>
        <fullName>ATP synthase subunit a</fullName>
    </recommendedName>
    <alternativeName>
        <fullName>F-ATPase protein 6</fullName>
    </alternativeName>
</protein>